<sequence length="305" mass="33261">MADINAYEGPAEAGFGDYVALLKPRVMSLVVFTAFVGLWIAPQPVNPFVAFCAVLFIALGGGASGALNMWYDADIDAVMRRTAGRPVPSGRVTSQEALAVGIALSGLSVMMLGLAANWFAAGFLAFTIFFYAVVYTIWLKRSTPQNIVIGGAAGAFPPMIGWACATGGIGIESLLMFALIFFWTPPHFWALALFMKDDYSKAGVPMLTVTHGRKVTRCHIFAYTLVLAPFALWLGFTSVGGPLYLAVSVVLNALFIAGGWQILRRSEDQAQADGYRVEKRYFRLSLYYTFLHFLALLVQHWVGGW</sequence>
<reference key="1">
    <citation type="submission" date="2006-12" db="EMBL/GenBank/DDBJ databases">
        <title>Complete sequence of chromosome 2 of Paracoccus denitrificans PD1222.</title>
        <authorList>
            <person name="Copeland A."/>
            <person name="Lucas S."/>
            <person name="Lapidus A."/>
            <person name="Barry K."/>
            <person name="Detter J.C."/>
            <person name="Glavina del Rio T."/>
            <person name="Hammon N."/>
            <person name="Israni S."/>
            <person name="Dalin E."/>
            <person name="Tice H."/>
            <person name="Pitluck S."/>
            <person name="Munk A.C."/>
            <person name="Brettin T."/>
            <person name="Bruce D."/>
            <person name="Han C."/>
            <person name="Tapia R."/>
            <person name="Gilna P."/>
            <person name="Schmutz J."/>
            <person name="Larimer F."/>
            <person name="Land M."/>
            <person name="Hauser L."/>
            <person name="Kyrpides N."/>
            <person name="Lykidis A."/>
            <person name="Spiro S."/>
            <person name="Richardson D.J."/>
            <person name="Moir J.W.B."/>
            <person name="Ferguson S.J."/>
            <person name="van Spanning R.J.M."/>
            <person name="Richardson P."/>
        </authorList>
    </citation>
    <scope>NUCLEOTIDE SEQUENCE [LARGE SCALE GENOMIC DNA]</scope>
    <source>
        <strain>Pd 1222</strain>
    </source>
</reference>
<proteinExistence type="inferred from homology"/>
<protein>
    <recommendedName>
        <fullName evidence="1">Protoheme IX farnesyltransferase</fullName>
        <ecNumber evidence="1">2.5.1.141</ecNumber>
    </recommendedName>
    <alternativeName>
        <fullName evidence="1">Heme B farnesyltransferase</fullName>
    </alternativeName>
    <alternativeName>
        <fullName evidence="1">Heme O synthase</fullName>
    </alternativeName>
</protein>
<name>COXX_PARDP</name>
<feature type="chain" id="PRO_0000327108" description="Protoheme IX farnesyltransferase">
    <location>
        <begin position="1"/>
        <end position="305"/>
    </location>
</feature>
<feature type="transmembrane region" description="Helical" evidence="1">
    <location>
        <begin position="26"/>
        <end position="46"/>
    </location>
</feature>
<feature type="transmembrane region" description="Helical" evidence="1">
    <location>
        <begin position="47"/>
        <end position="67"/>
    </location>
</feature>
<feature type="transmembrane region" description="Helical" evidence="1">
    <location>
        <begin position="98"/>
        <end position="118"/>
    </location>
</feature>
<feature type="transmembrane region" description="Helical" evidence="1">
    <location>
        <begin position="119"/>
        <end position="139"/>
    </location>
</feature>
<feature type="transmembrane region" description="Helical" evidence="1">
    <location>
        <begin position="147"/>
        <end position="167"/>
    </location>
</feature>
<feature type="transmembrane region" description="Helical" evidence="1">
    <location>
        <begin position="174"/>
        <end position="194"/>
    </location>
</feature>
<feature type="transmembrane region" description="Helical" evidence="1">
    <location>
        <begin position="220"/>
        <end position="240"/>
    </location>
</feature>
<feature type="transmembrane region" description="Helical" evidence="1">
    <location>
        <begin position="243"/>
        <end position="263"/>
    </location>
</feature>
<feature type="transmembrane region" description="Helical" evidence="1">
    <location>
        <begin position="284"/>
        <end position="304"/>
    </location>
</feature>
<gene>
    <name evidence="1" type="primary">ctaB</name>
    <name type="ordered locus">Pden_4320</name>
</gene>
<organism>
    <name type="scientific">Paracoccus denitrificans (strain Pd 1222)</name>
    <dbReference type="NCBI Taxonomy" id="318586"/>
    <lineage>
        <taxon>Bacteria</taxon>
        <taxon>Pseudomonadati</taxon>
        <taxon>Pseudomonadota</taxon>
        <taxon>Alphaproteobacteria</taxon>
        <taxon>Rhodobacterales</taxon>
        <taxon>Paracoccaceae</taxon>
        <taxon>Paracoccus</taxon>
    </lineage>
</organism>
<evidence type="ECO:0000255" key="1">
    <source>
        <dbReference type="HAMAP-Rule" id="MF_00154"/>
    </source>
</evidence>
<keyword id="KW-0997">Cell inner membrane</keyword>
<keyword id="KW-1003">Cell membrane</keyword>
<keyword id="KW-0350">Heme biosynthesis</keyword>
<keyword id="KW-0472">Membrane</keyword>
<keyword id="KW-1185">Reference proteome</keyword>
<keyword id="KW-0808">Transferase</keyword>
<keyword id="KW-0812">Transmembrane</keyword>
<keyword id="KW-1133">Transmembrane helix</keyword>
<dbReference type="EC" id="2.5.1.141" evidence="1"/>
<dbReference type="EMBL" id="CP000490">
    <property type="protein sequence ID" value="ABL72384.1"/>
    <property type="molecule type" value="Genomic_DNA"/>
</dbReference>
<dbReference type="RefSeq" id="WP_011750546.1">
    <property type="nucleotide sequence ID" value="NC_008687.1"/>
</dbReference>
<dbReference type="SMR" id="A1BA40"/>
<dbReference type="STRING" id="318586.Pden_4320"/>
<dbReference type="EnsemblBacteria" id="ABL72384">
    <property type="protein sequence ID" value="ABL72384"/>
    <property type="gene ID" value="Pden_4320"/>
</dbReference>
<dbReference type="GeneID" id="93453986"/>
<dbReference type="KEGG" id="pde:Pden_4320"/>
<dbReference type="eggNOG" id="COG0109">
    <property type="taxonomic scope" value="Bacteria"/>
</dbReference>
<dbReference type="HOGENOM" id="CLU_029631_0_2_5"/>
<dbReference type="OrthoDB" id="9814417at2"/>
<dbReference type="UniPathway" id="UPA00834">
    <property type="reaction ID" value="UER00712"/>
</dbReference>
<dbReference type="Proteomes" id="UP000000361">
    <property type="component" value="Chromosome 2"/>
</dbReference>
<dbReference type="GO" id="GO:0005886">
    <property type="term" value="C:plasma membrane"/>
    <property type="evidence" value="ECO:0007669"/>
    <property type="project" value="UniProtKB-SubCell"/>
</dbReference>
<dbReference type="GO" id="GO:0008495">
    <property type="term" value="F:protoheme IX farnesyltransferase activity"/>
    <property type="evidence" value="ECO:0007669"/>
    <property type="project" value="UniProtKB-UniRule"/>
</dbReference>
<dbReference type="GO" id="GO:0048034">
    <property type="term" value="P:heme O biosynthetic process"/>
    <property type="evidence" value="ECO:0007669"/>
    <property type="project" value="UniProtKB-UniRule"/>
</dbReference>
<dbReference type="CDD" id="cd13957">
    <property type="entry name" value="PT_UbiA_Cox10"/>
    <property type="match status" value="1"/>
</dbReference>
<dbReference type="Gene3D" id="1.10.357.140">
    <property type="entry name" value="UbiA prenyltransferase"/>
    <property type="match status" value="1"/>
</dbReference>
<dbReference type="HAMAP" id="MF_00154">
    <property type="entry name" value="CyoE_CtaB"/>
    <property type="match status" value="1"/>
</dbReference>
<dbReference type="InterPro" id="IPR006369">
    <property type="entry name" value="Protohaem_IX_farnesylTrfase"/>
</dbReference>
<dbReference type="InterPro" id="IPR000537">
    <property type="entry name" value="UbiA_prenyltransferase"/>
</dbReference>
<dbReference type="InterPro" id="IPR030470">
    <property type="entry name" value="UbiA_prenylTrfase_CS"/>
</dbReference>
<dbReference type="InterPro" id="IPR044878">
    <property type="entry name" value="UbiA_sf"/>
</dbReference>
<dbReference type="NCBIfam" id="TIGR01473">
    <property type="entry name" value="cyoE_ctaB"/>
    <property type="match status" value="1"/>
</dbReference>
<dbReference type="NCBIfam" id="NF003349">
    <property type="entry name" value="PRK04375.1-2"/>
    <property type="match status" value="1"/>
</dbReference>
<dbReference type="PANTHER" id="PTHR43448:SF7">
    <property type="entry name" value="4-HYDROXYBENZOATE SOLANESYLTRANSFERASE"/>
    <property type="match status" value="1"/>
</dbReference>
<dbReference type="PANTHER" id="PTHR43448">
    <property type="entry name" value="PROTOHEME IX FARNESYLTRANSFERASE, MITOCHONDRIAL"/>
    <property type="match status" value="1"/>
</dbReference>
<dbReference type="Pfam" id="PF01040">
    <property type="entry name" value="UbiA"/>
    <property type="match status" value="1"/>
</dbReference>
<dbReference type="PROSITE" id="PS00943">
    <property type="entry name" value="UBIA"/>
    <property type="match status" value="1"/>
</dbReference>
<comment type="function">
    <text evidence="1">Converts heme B (protoheme IX) to heme O by substitution of the vinyl group on carbon 2 of heme B porphyrin ring with a hydroxyethyl farnesyl side group.</text>
</comment>
<comment type="catalytic activity">
    <reaction evidence="1">
        <text>heme b + (2E,6E)-farnesyl diphosphate + H2O = Fe(II)-heme o + diphosphate</text>
        <dbReference type="Rhea" id="RHEA:28070"/>
        <dbReference type="ChEBI" id="CHEBI:15377"/>
        <dbReference type="ChEBI" id="CHEBI:33019"/>
        <dbReference type="ChEBI" id="CHEBI:60344"/>
        <dbReference type="ChEBI" id="CHEBI:60530"/>
        <dbReference type="ChEBI" id="CHEBI:175763"/>
        <dbReference type="EC" id="2.5.1.141"/>
    </reaction>
</comment>
<comment type="pathway">
    <text evidence="1">Porphyrin-containing compound metabolism; heme O biosynthesis; heme O from protoheme: step 1/1.</text>
</comment>
<comment type="subunit">
    <text evidence="1">Interacts with CtaA.</text>
</comment>
<comment type="subcellular location">
    <subcellularLocation>
        <location evidence="1">Cell inner membrane</location>
        <topology evidence="1">Multi-pass membrane protein</topology>
    </subcellularLocation>
</comment>
<comment type="miscellaneous">
    <text evidence="1">Carbon 2 of the heme B porphyrin ring is defined according to the Fischer nomenclature.</text>
</comment>
<comment type="similarity">
    <text evidence="1">Belongs to the UbiA prenyltransferase family. Protoheme IX farnesyltransferase subfamily.</text>
</comment>
<accession>A1BA40</accession>